<sequence>MTAKVRVIFRAAGGFEHLVETEAGVSLMEAAVLNGVDGIEAVCGGACACATCHVYVGPEWLDALKPPSETEDEMLDCVAERAPHSRLSCQIRLTDLLDGLTLELPKAQS</sequence>
<name>CARAC_SPHSX</name>
<keyword id="KW-0001">2Fe-2S</keyword>
<keyword id="KW-0408">Iron</keyword>
<keyword id="KW-0411">Iron-sulfur</keyword>
<keyword id="KW-0479">Metal-binding</keyword>
<organism>
    <name type="scientific">Sphingomonas sp</name>
    <dbReference type="NCBI Taxonomy" id="28214"/>
    <lineage>
        <taxon>Bacteria</taxon>
        <taxon>Pseudomonadati</taxon>
        <taxon>Pseudomonadota</taxon>
        <taxon>Alphaproteobacteria</taxon>
        <taxon>Sphingomonadales</taxon>
        <taxon>Sphingomonadaceae</taxon>
        <taxon>Sphingomonas</taxon>
    </lineage>
</organism>
<gene>
    <name type="primary">carAc</name>
</gene>
<feature type="chain" id="PRO_0000419029" description="Ferredoxin CarAc">
    <location>
        <begin position="1"/>
        <end position="109"/>
    </location>
</feature>
<feature type="domain" description="2Fe-2S ferredoxin-type" evidence="2">
    <location>
        <begin position="3"/>
        <end position="108"/>
    </location>
</feature>
<feature type="binding site" evidence="2">
    <location>
        <position position="43"/>
    </location>
    <ligand>
        <name>[2Fe-2S] cluster</name>
        <dbReference type="ChEBI" id="CHEBI:190135"/>
    </ligand>
</feature>
<feature type="binding site" evidence="2">
    <location>
        <position position="49"/>
    </location>
    <ligand>
        <name>[2Fe-2S] cluster</name>
        <dbReference type="ChEBI" id="CHEBI:190135"/>
    </ligand>
</feature>
<feature type="binding site" evidence="2">
    <location>
        <position position="52"/>
    </location>
    <ligand>
        <name>[2Fe-2S] cluster</name>
        <dbReference type="ChEBI" id="CHEBI:190135"/>
    </ligand>
</feature>
<feature type="binding site" evidence="2">
    <location>
        <position position="89"/>
    </location>
    <ligand>
        <name>[2Fe-2S] cluster</name>
        <dbReference type="ChEBI" id="CHEBI:190135"/>
    </ligand>
</feature>
<reference key="1">
    <citation type="journal article" date="2010" name="PLoS ONE">
        <title>The genes coding for the conversion of carbazole to catechol are flanked by IS6100 elements in Sphingomonas sp. strain XLDN2-5.</title>
        <authorList>
            <person name="Gai Z."/>
            <person name="Wang X."/>
            <person name="Liu X."/>
            <person name="Tai C."/>
            <person name="Tang H."/>
            <person name="He X."/>
            <person name="Wu G."/>
            <person name="Deng Z."/>
            <person name="Xu P."/>
        </authorList>
    </citation>
    <scope>NUCLEOTIDE SEQUENCE [GENOMIC DNA]</scope>
    <scope>FUNCTION IN THE CARBAZOLE DEGRADATION</scope>
    <scope>NOMENCLATURE</scope>
    <source>
        <strain>XLDN2-5</strain>
    </source>
</reference>
<proteinExistence type="evidence at protein level"/>
<protein>
    <recommendedName>
        <fullName>Ferredoxin CarAc</fullName>
    </recommendedName>
    <alternativeName>
        <fullName>Carbazole 1,9a-dioxygenase, ferredoxin component</fullName>
        <shortName>CARDO</shortName>
    </alternativeName>
</protein>
<accession>D5IGG4</accession>
<dbReference type="EMBL" id="GU123624">
    <property type="protein sequence ID" value="ADC31798.1"/>
    <property type="molecule type" value="Genomic_DNA"/>
</dbReference>
<dbReference type="SMR" id="D5IGG4"/>
<dbReference type="BioCyc" id="MetaCyc:MONOMER-15738"/>
<dbReference type="BRENDA" id="1.14.12.22">
    <property type="organism ID" value="5801"/>
</dbReference>
<dbReference type="GO" id="GO:0005829">
    <property type="term" value="C:cytosol"/>
    <property type="evidence" value="ECO:0007669"/>
    <property type="project" value="TreeGrafter"/>
</dbReference>
<dbReference type="GO" id="GO:0051537">
    <property type="term" value="F:2 iron, 2 sulfur cluster binding"/>
    <property type="evidence" value="ECO:0000250"/>
    <property type="project" value="UniProtKB"/>
</dbReference>
<dbReference type="GO" id="GO:0009055">
    <property type="term" value="F:electron transfer activity"/>
    <property type="evidence" value="ECO:0007669"/>
    <property type="project" value="TreeGrafter"/>
</dbReference>
<dbReference type="GO" id="GO:0008901">
    <property type="term" value="F:ferredoxin hydrogenase activity"/>
    <property type="evidence" value="ECO:0000250"/>
    <property type="project" value="UniProtKB"/>
</dbReference>
<dbReference type="GO" id="GO:0046872">
    <property type="term" value="F:metal ion binding"/>
    <property type="evidence" value="ECO:0007669"/>
    <property type="project" value="UniProtKB-KW"/>
</dbReference>
<dbReference type="GO" id="GO:0046232">
    <property type="term" value="P:carbazole catabolic process"/>
    <property type="evidence" value="ECO:0000314"/>
    <property type="project" value="UniProtKB"/>
</dbReference>
<dbReference type="GO" id="GO:0140647">
    <property type="term" value="P:P450-containing electron transport chain"/>
    <property type="evidence" value="ECO:0007669"/>
    <property type="project" value="InterPro"/>
</dbReference>
<dbReference type="CDD" id="cd00207">
    <property type="entry name" value="fer2"/>
    <property type="match status" value="1"/>
</dbReference>
<dbReference type="Gene3D" id="3.10.20.30">
    <property type="match status" value="1"/>
</dbReference>
<dbReference type="InterPro" id="IPR036010">
    <property type="entry name" value="2Fe-2S_ferredoxin-like_sf"/>
</dbReference>
<dbReference type="InterPro" id="IPR001041">
    <property type="entry name" value="2Fe-2S_ferredoxin-type"/>
</dbReference>
<dbReference type="InterPro" id="IPR001055">
    <property type="entry name" value="Adrenodoxin-like"/>
</dbReference>
<dbReference type="InterPro" id="IPR018298">
    <property type="entry name" value="Adrenodoxin_Fe-S_BS"/>
</dbReference>
<dbReference type="InterPro" id="IPR012675">
    <property type="entry name" value="Beta-grasp_dom_sf"/>
</dbReference>
<dbReference type="PANTHER" id="PTHR23426:SF65">
    <property type="entry name" value="FERREDOXIN-2, MITOCHONDRIAL"/>
    <property type="match status" value="1"/>
</dbReference>
<dbReference type="PANTHER" id="PTHR23426">
    <property type="entry name" value="FERREDOXIN/ADRENODOXIN"/>
    <property type="match status" value="1"/>
</dbReference>
<dbReference type="Pfam" id="PF00111">
    <property type="entry name" value="Fer2"/>
    <property type="match status" value="1"/>
</dbReference>
<dbReference type="PRINTS" id="PR00355">
    <property type="entry name" value="ADRENODOXIN"/>
</dbReference>
<dbReference type="SUPFAM" id="SSF54292">
    <property type="entry name" value="2Fe-2S ferredoxin-like"/>
    <property type="match status" value="1"/>
</dbReference>
<dbReference type="PROSITE" id="PS51085">
    <property type="entry name" value="2FE2S_FER_2"/>
    <property type="match status" value="1"/>
</dbReference>
<dbReference type="PROSITE" id="PS00814">
    <property type="entry name" value="ADX"/>
    <property type="match status" value="1"/>
</dbReference>
<evidence type="ECO:0000250" key="1"/>
<evidence type="ECO:0000255" key="2">
    <source>
        <dbReference type="PROSITE-ProRule" id="PRU00465"/>
    </source>
</evidence>
<evidence type="ECO:0000269" key="3">
    <source>
    </source>
</evidence>
<evidence type="ECO:0000305" key="4"/>
<comment type="function">
    <text evidence="3">Part of the multicomponent carbazole 1,9a-dioxygenase (CARDO), that converts carbazole (CAR) into 2-aminobiphenyl-2,3-diol. Acts as a mediator in the electron transfer from fdr to CarAa.</text>
</comment>
<comment type="cofactor">
    <cofactor evidence="1">
        <name>[2Fe-2S] cluster</name>
        <dbReference type="ChEBI" id="CHEBI:190135"/>
    </cofactor>
    <text evidence="1">Binds 1 [2Fe-2S] cluster per subunit.</text>
</comment>
<comment type="subunit">
    <text evidence="4">Monomer. Carbazole 1,9a-dioxygenase complex consists of a terminal oxygenase component CarAa, a ferredoxin reductase component fdr and a ferredoxin component CarAc (Probable).</text>
</comment>
<comment type="similarity">
    <text evidence="4">Belongs to the adrenodoxin/putidaredoxin family.</text>
</comment>